<name>TIG_STRP8</name>
<sequence>MSTSFENKATNRGVITFTISQDKIKLALDKAFNKIKKDLNAPGFRKGHMPRPVFNQKFGEEVLYEDALNIVLPEAYEAAVTELGLDVVAQPKIDVVSMEKGKEWTLSAEVVTKPEVKLGDYKNLVVEVDASKEVSDEDVDAKIERERQNLAELIIKDGEAAQGDTVVIDFVGSVDGVEFDGGKGDNFSLELGSGQFIPGFEDQLVGAKAGDEVEVNVTFPESYQAEDLAGKAAKFMTTIHEVKTKEVPELDDELAKDIDEDVDTLEDLKVKYRKELEAAQETAYDDAVEGAAIELAVANAEIVDLPEEMIHEEVNRSVNEFMGNMQRQGISPEMYFQLTGTTQEDLHNQYSAEADKRVKTNLVIEAIAKAEGFEATDSEIEQEINDLATEYNMPADQVRSLLSADMLKHDIAMKKAVEVITSTASVK</sequence>
<accession>Q8NZF6</accession>
<keyword id="KW-0131">Cell cycle</keyword>
<keyword id="KW-0132">Cell division</keyword>
<keyword id="KW-0143">Chaperone</keyword>
<keyword id="KW-0963">Cytoplasm</keyword>
<keyword id="KW-0413">Isomerase</keyword>
<keyword id="KW-0697">Rotamase</keyword>
<organism>
    <name type="scientific">Streptococcus pyogenes serotype M18 (strain MGAS8232)</name>
    <dbReference type="NCBI Taxonomy" id="186103"/>
    <lineage>
        <taxon>Bacteria</taxon>
        <taxon>Bacillati</taxon>
        <taxon>Bacillota</taxon>
        <taxon>Bacilli</taxon>
        <taxon>Lactobacillales</taxon>
        <taxon>Streptococcaceae</taxon>
        <taxon>Streptococcus</taxon>
    </lineage>
</organism>
<dbReference type="EC" id="5.2.1.8" evidence="1"/>
<dbReference type="EMBL" id="AE009949">
    <property type="protein sequence ID" value="AAL98452.1"/>
    <property type="molecule type" value="Genomic_DNA"/>
</dbReference>
<dbReference type="RefSeq" id="WP_011018213.1">
    <property type="nucleotide sequence ID" value="NC_003485.1"/>
</dbReference>
<dbReference type="SMR" id="Q8NZF6"/>
<dbReference type="KEGG" id="spm:spyM18_1961"/>
<dbReference type="HOGENOM" id="CLU_033058_3_2_9"/>
<dbReference type="GO" id="GO:0005737">
    <property type="term" value="C:cytoplasm"/>
    <property type="evidence" value="ECO:0007669"/>
    <property type="project" value="UniProtKB-SubCell"/>
</dbReference>
<dbReference type="GO" id="GO:0003755">
    <property type="term" value="F:peptidyl-prolyl cis-trans isomerase activity"/>
    <property type="evidence" value="ECO:0007669"/>
    <property type="project" value="UniProtKB-UniRule"/>
</dbReference>
<dbReference type="GO" id="GO:0044183">
    <property type="term" value="F:protein folding chaperone"/>
    <property type="evidence" value="ECO:0007669"/>
    <property type="project" value="TreeGrafter"/>
</dbReference>
<dbReference type="GO" id="GO:0043022">
    <property type="term" value="F:ribosome binding"/>
    <property type="evidence" value="ECO:0007669"/>
    <property type="project" value="TreeGrafter"/>
</dbReference>
<dbReference type="GO" id="GO:0051083">
    <property type="term" value="P:'de novo' cotranslational protein folding"/>
    <property type="evidence" value="ECO:0007669"/>
    <property type="project" value="TreeGrafter"/>
</dbReference>
<dbReference type="GO" id="GO:0051301">
    <property type="term" value="P:cell division"/>
    <property type="evidence" value="ECO:0007669"/>
    <property type="project" value="UniProtKB-KW"/>
</dbReference>
<dbReference type="GO" id="GO:0061077">
    <property type="term" value="P:chaperone-mediated protein folding"/>
    <property type="evidence" value="ECO:0007669"/>
    <property type="project" value="TreeGrafter"/>
</dbReference>
<dbReference type="GO" id="GO:0015031">
    <property type="term" value="P:protein transport"/>
    <property type="evidence" value="ECO:0007669"/>
    <property type="project" value="UniProtKB-UniRule"/>
</dbReference>
<dbReference type="GO" id="GO:0043335">
    <property type="term" value="P:protein unfolding"/>
    <property type="evidence" value="ECO:0007669"/>
    <property type="project" value="TreeGrafter"/>
</dbReference>
<dbReference type="FunFam" id="3.10.50.40:FF:000001">
    <property type="entry name" value="Trigger factor"/>
    <property type="match status" value="1"/>
</dbReference>
<dbReference type="Gene3D" id="3.10.50.40">
    <property type="match status" value="1"/>
</dbReference>
<dbReference type="Gene3D" id="3.30.70.1050">
    <property type="entry name" value="Trigger factor ribosome-binding domain"/>
    <property type="match status" value="1"/>
</dbReference>
<dbReference type="Gene3D" id="1.10.3120.10">
    <property type="entry name" value="Trigger factor, C-terminal domain"/>
    <property type="match status" value="1"/>
</dbReference>
<dbReference type="HAMAP" id="MF_00303">
    <property type="entry name" value="Trigger_factor_Tig"/>
    <property type="match status" value="1"/>
</dbReference>
<dbReference type="InterPro" id="IPR046357">
    <property type="entry name" value="PPIase_dom_sf"/>
</dbReference>
<dbReference type="InterPro" id="IPR001179">
    <property type="entry name" value="PPIase_FKBP_dom"/>
</dbReference>
<dbReference type="InterPro" id="IPR005215">
    <property type="entry name" value="Trig_fac"/>
</dbReference>
<dbReference type="InterPro" id="IPR008880">
    <property type="entry name" value="Trigger_fac_C"/>
</dbReference>
<dbReference type="InterPro" id="IPR037041">
    <property type="entry name" value="Trigger_fac_C_sf"/>
</dbReference>
<dbReference type="InterPro" id="IPR008881">
    <property type="entry name" value="Trigger_fac_ribosome-bd_bac"/>
</dbReference>
<dbReference type="InterPro" id="IPR036611">
    <property type="entry name" value="Trigger_fac_ribosome-bd_sf"/>
</dbReference>
<dbReference type="InterPro" id="IPR027304">
    <property type="entry name" value="Trigger_fact/SurA_dom_sf"/>
</dbReference>
<dbReference type="NCBIfam" id="TIGR00115">
    <property type="entry name" value="tig"/>
    <property type="match status" value="1"/>
</dbReference>
<dbReference type="PANTHER" id="PTHR30560">
    <property type="entry name" value="TRIGGER FACTOR CHAPERONE AND PEPTIDYL-PROLYL CIS/TRANS ISOMERASE"/>
    <property type="match status" value="1"/>
</dbReference>
<dbReference type="PANTHER" id="PTHR30560:SF3">
    <property type="entry name" value="TRIGGER FACTOR-LIKE PROTEIN TIG, CHLOROPLASTIC"/>
    <property type="match status" value="1"/>
</dbReference>
<dbReference type="Pfam" id="PF00254">
    <property type="entry name" value="FKBP_C"/>
    <property type="match status" value="1"/>
</dbReference>
<dbReference type="Pfam" id="PF05698">
    <property type="entry name" value="Trigger_C"/>
    <property type="match status" value="1"/>
</dbReference>
<dbReference type="Pfam" id="PF05697">
    <property type="entry name" value="Trigger_N"/>
    <property type="match status" value="1"/>
</dbReference>
<dbReference type="PIRSF" id="PIRSF003095">
    <property type="entry name" value="Trigger_factor"/>
    <property type="match status" value="1"/>
</dbReference>
<dbReference type="SUPFAM" id="SSF54534">
    <property type="entry name" value="FKBP-like"/>
    <property type="match status" value="1"/>
</dbReference>
<dbReference type="SUPFAM" id="SSF109998">
    <property type="entry name" value="Triger factor/SurA peptide-binding domain-like"/>
    <property type="match status" value="1"/>
</dbReference>
<dbReference type="SUPFAM" id="SSF102735">
    <property type="entry name" value="Trigger factor ribosome-binding domain"/>
    <property type="match status" value="1"/>
</dbReference>
<dbReference type="PROSITE" id="PS50059">
    <property type="entry name" value="FKBP_PPIASE"/>
    <property type="match status" value="1"/>
</dbReference>
<comment type="function">
    <text evidence="1">Involved in protein export. Acts as a chaperone by maintaining the newly synthesized protein in an open conformation. Functions as a peptidyl-prolyl cis-trans isomerase.</text>
</comment>
<comment type="catalytic activity">
    <reaction evidence="1">
        <text>[protein]-peptidylproline (omega=180) = [protein]-peptidylproline (omega=0)</text>
        <dbReference type="Rhea" id="RHEA:16237"/>
        <dbReference type="Rhea" id="RHEA-COMP:10747"/>
        <dbReference type="Rhea" id="RHEA-COMP:10748"/>
        <dbReference type="ChEBI" id="CHEBI:83833"/>
        <dbReference type="ChEBI" id="CHEBI:83834"/>
        <dbReference type="EC" id="5.2.1.8"/>
    </reaction>
</comment>
<comment type="subcellular location">
    <subcellularLocation>
        <location>Cytoplasm</location>
    </subcellularLocation>
    <text evidence="1">About half TF is bound to the ribosome near the polypeptide exit tunnel while the other half is free in the cytoplasm.</text>
</comment>
<comment type="domain">
    <text evidence="1">Consists of 3 domains; the N-terminus binds the ribosome, the middle domain has PPIase activity, while the C-terminus has intrinsic chaperone activity on its own.</text>
</comment>
<comment type="similarity">
    <text evidence="1">Belongs to the FKBP-type PPIase family. Tig subfamily.</text>
</comment>
<gene>
    <name evidence="1" type="primary">tig</name>
    <name type="synonym">ropA</name>
    <name type="ordered locus">spyM18_1961</name>
</gene>
<reference key="1">
    <citation type="journal article" date="2002" name="Proc. Natl. Acad. Sci. U.S.A.">
        <title>Genome sequence and comparative microarray analysis of serotype M18 group A Streptococcus strains associated with acute rheumatic fever outbreaks.</title>
        <authorList>
            <person name="Smoot J.C."/>
            <person name="Barbian K.D."/>
            <person name="Van Gompel J.J."/>
            <person name="Smoot L.M."/>
            <person name="Chaussee M.S."/>
            <person name="Sylva G.L."/>
            <person name="Sturdevant D.E."/>
            <person name="Ricklefs S.M."/>
            <person name="Porcella S.F."/>
            <person name="Parkins L.D."/>
            <person name="Beres S.B."/>
            <person name="Campbell D.S."/>
            <person name="Smith T.M."/>
            <person name="Zhang Q."/>
            <person name="Kapur V."/>
            <person name="Daly J.A."/>
            <person name="Veasy L.G."/>
            <person name="Musser J.M."/>
        </authorList>
    </citation>
    <scope>NUCLEOTIDE SEQUENCE [LARGE SCALE GENOMIC DNA]</scope>
    <source>
        <strain>MGAS8232</strain>
    </source>
</reference>
<evidence type="ECO:0000255" key="1">
    <source>
        <dbReference type="HAMAP-Rule" id="MF_00303"/>
    </source>
</evidence>
<feature type="chain" id="PRO_0000179443" description="Trigger factor">
    <location>
        <begin position="1"/>
        <end position="427"/>
    </location>
</feature>
<feature type="domain" description="PPIase FKBP-type" evidence="1">
    <location>
        <begin position="163"/>
        <end position="248"/>
    </location>
</feature>
<proteinExistence type="inferred from homology"/>
<protein>
    <recommendedName>
        <fullName evidence="1">Trigger factor</fullName>
        <shortName evidence="1">TF</shortName>
        <ecNumber evidence="1">5.2.1.8</ecNumber>
    </recommendedName>
    <alternativeName>
        <fullName evidence="1">PPIase</fullName>
    </alternativeName>
</protein>